<feature type="transit peptide" description="Mitochondrion" evidence="6">
    <location>
        <begin position="1"/>
        <end position="13"/>
    </location>
</feature>
<feature type="chain" id="PRO_0000193540" description="Cytochrome b-c1 complex subunit 6, mitochondrial">
    <location>
        <begin position="14"/>
        <end position="91"/>
    </location>
</feature>
<feature type="region of interest" description="Disordered" evidence="3">
    <location>
        <begin position="1"/>
        <end position="30"/>
    </location>
</feature>
<feature type="compositionally biased region" description="Acidic residues" evidence="3">
    <location>
        <begin position="17"/>
        <end position="27"/>
    </location>
</feature>
<feature type="modified residue" description="N6-acetyllysine" evidence="2">
    <location>
        <position position="42"/>
    </location>
</feature>
<feature type="modified residue" description="N6-acetyllysine" evidence="2">
    <location>
        <position position="85"/>
    </location>
</feature>
<feature type="disulfide bond" evidence="5">
    <location>
        <begin position="37"/>
        <end position="81"/>
    </location>
</feature>
<feature type="disulfide bond" evidence="5">
    <location>
        <begin position="53"/>
        <end position="67"/>
    </location>
</feature>
<feature type="helix" evidence="9">
    <location>
        <begin position="17"/>
        <end position="24"/>
    </location>
</feature>
<feature type="helix" evidence="10">
    <location>
        <begin position="29"/>
        <end position="37"/>
    </location>
</feature>
<feature type="strand" evidence="11">
    <location>
        <begin position="38"/>
        <end position="40"/>
    </location>
</feature>
<feature type="helix" evidence="10">
    <location>
        <begin position="41"/>
        <end position="58"/>
    </location>
</feature>
<feature type="strand" evidence="9">
    <location>
        <begin position="61"/>
        <end position="63"/>
    </location>
</feature>
<feature type="helix" evidence="10">
    <location>
        <begin position="68"/>
        <end position="85"/>
    </location>
</feature>
<feature type="helix" evidence="10">
    <location>
        <begin position="86"/>
        <end position="89"/>
    </location>
</feature>
<reference key="1">
    <citation type="submission" date="2005-08" db="EMBL/GenBank/DDBJ databases">
        <authorList>
            <consortium name="NIH - Mammalian Gene Collection (MGC) project"/>
        </authorList>
    </citation>
    <scope>NUCLEOTIDE SEQUENCE [LARGE SCALE MRNA]</scope>
    <source>
        <strain>Crossbred X Angus</strain>
        <tissue>Liver</tissue>
    </source>
</reference>
<reference key="2">
    <citation type="journal article" date="1982" name="J. Biochem.">
        <title>Identity of the heme-not-containing protein in bovine heart cytochrome c1 preparation with the protein mediating c1-c complex formation -- a protein with high glutamic acid content.</title>
        <authorList>
            <person name="Wakabayashi S."/>
            <person name="Takeda H."/>
            <person name="Matsubara H."/>
            <person name="Kim C.H."/>
            <person name="King T.E."/>
        </authorList>
    </citation>
    <scope>PROTEIN SEQUENCE OF 14-91</scope>
</reference>
<reference key="3">
    <citation type="journal article" date="1985" name="J. Biochem.">
        <title>Dissociation of bovine cytochrome c1 subcomplex and the status of cysteine residues in the subunits.</title>
        <authorList>
            <person name="Mukai K."/>
            <person name="Miyazaki T."/>
            <person name="Wakabayashi S."/>
            <person name="Kuramitsu S."/>
            <person name="Matsubara H."/>
        </authorList>
    </citation>
    <scope>DISULFIDE BONDS</scope>
</reference>
<reference key="4">
    <citation type="journal article" date="1997" name="Science">
        <title>Crystal structure of the cytochrome bc1 complex from bovine heart mitochondria.</title>
        <authorList>
            <person name="Xia D."/>
            <person name="Yu C.A."/>
            <person name="Kim H."/>
            <person name="Xia J.Z."/>
            <person name="Kachurin A.M."/>
            <person name="Zhang L."/>
            <person name="Yu L."/>
            <person name="Deisenhofer J."/>
        </authorList>
    </citation>
    <scope>X-RAY CRYSTALLOGRAPHY (2.7 ANGSTROMS) OF 14-91</scope>
</reference>
<reference key="5">
    <citation type="journal article" date="1997" name="Science">
        <authorList>
            <person name="Xia D."/>
            <person name="Yu C.A."/>
            <person name="Kim H."/>
            <person name="Xia J.Z."/>
            <person name="Kachurin A.M."/>
            <person name="Zhang L."/>
            <person name="Yu L."/>
            <person name="Deisenhofer J."/>
        </authorList>
    </citation>
    <scope>ERRATUM OF PUBMED:9204897</scope>
</reference>
<reference key="6">
    <citation type="journal article" date="1998" name="Science">
        <title>Complete structure of the 11-subunit bovine mitochondrial cytochrome bc1 complex.</title>
        <authorList>
            <person name="Iwata S."/>
            <person name="Lee J.W."/>
            <person name="Okada K."/>
            <person name="Lee J.K."/>
            <person name="Iwata M."/>
            <person name="Rasmussen B."/>
            <person name="Link T.A."/>
            <person name="Ramaswamy S."/>
            <person name="Jap B.K."/>
        </authorList>
    </citation>
    <scope>X-RAY CRYSTALLOGRAPHY (3.0 ANGSTROMS) OF 14-91</scope>
</reference>
<reference key="7">
    <citation type="journal article" date="2002" name="Biochemistry">
        <title>The crystal structure of mitochondrial cytochrome bc1 in complex with famoxadone: the role of aromatic-aromatic interaction in inhibition.</title>
        <authorList>
            <person name="Gao X."/>
            <person name="Wen X."/>
            <person name="Yu C."/>
            <person name="Esser L."/>
            <person name="Tsao S."/>
            <person name="Quinn B."/>
            <person name="Zhang L."/>
            <person name="Yu L."/>
            <person name="Xia D."/>
        </authorList>
    </citation>
    <scope>X-RAY CRYSTALLOGRAPHY (2.35 ANGSTROMS)</scope>
</reference>
<reference key="8">
    <citation type="journal article" date="2004" name="J. Mol. Biol.">
        <title>Crystallographic studies of quinol oxidation site inhibitors: a modified classification of inhibitors for the cytochrome bc(1) complex.</title>
        <authorList>
            <person name="Esser L."/>
            <person name="Quinn B."/>
            <person name="Li Y.F."/>
            <person name="Zhang M."/>
            <person name="Elberry M."/>
            <person name="Yu L."/>
            <person name="Yu C.A."/>
            <person name="Xia D."/>
        </authorList>
    </citation>
    <scope>X-RAY CRYSTALLOGRAPHY (2.69 ANGSTROMS)</scope>
</reference>
<reference key="9">
    <citation type="journal article" date="2005" name="J. Mol. Biol.">
        <title>Binding of the respiratory chain inhibitor antimycin to the mitochondrial bc1 complex: a new crystal structure reveals an altered intramolecular hydrogen-bonding pattern.</title>
        <authorList>
            <person name="Huang L.S."/>
            <person name="Cobessi D."/>
            <person name="Tung E.Y."/>
            <person name="Berry E.A."/>
        </authorList>
    </citation>
    <scope>X-RAY CRYSTALLOGRAPHY (2.1 ANGSTROMS)</scope>
</reference>
<reference key="10">
    <citation type="journal article" date="2006" name="Proc. Natl. Acad. Sci. U.S.A.">
        <title>Surface-modulated motion switch: capture and release of iron-sulfur protein in the cytochrome bc1 complex.</title>
        <authorList>
            <person name="Esser L."/>
            <person name="Gong X."/>
            <person name="Yang S."/>
            <person name="Yu L."/>
            <person name="Yu C.A."/>
            <person name="Xia D."/>
        </authorList>
    </citation>
    <scope>X-RAY CRYSTALLOGRAPHY (2.26 ANGSTROMS)</scope>
</reference>
<reference key="11">
    <citation type="journal article" date="2016" name="Elife">
        <title>Functional asymmetry and electron flow in the bovine respirasome.</title>
        <authorList>
            <person name="Sousa J.S."/>
            <person name="Mills D.J."/>
            <person name="Vonck J."/>
            <person name="Kuehlbrandt W."/>
        </authorList>
    </citation>
    <scope>STRUCTURE BY ELECTRON MICROSCOPY (9.10 ANGSTROMS)</scope>
    <scope>SUBUNIT</scope>
</reference>
<accession>P00126</accession>
<accession>Q3SZS4</accession>
<proteinExistence type="evidence at protein level"/>
<organism>
    <name type="scientific">Bos taurus</name>
    <name type="common">Bovine</name>
    <dbReference type="NCBI Taxonomy" id="9913"/>
    <lineage>
        <taxon>Eukaryota</taxon>
        <taxon>Metazoa</taxon>
        <taxon>Chordata</taxon>
        <taxon>Craniata</taxon>
        <taxon>Vertebrata</taxon>
        <taxon>Euteleostomi</taxon>
        <taxon>Mammalia</taxon>
        <taxon>Eutheria</taxon>
        <taxon>Laurasiatheria</taxon>
        <taxon>Artiodactyla</taxon>
        <taxon>Ruminantia</taxon>
        <taxon>Pecora</taxon>
        <taxon>Bovidae</taxon>
        <taxon>Bovinae</taxon>
        <taxon>Bos</taxon>
    </lineage>
</organism>
<sequence length="91" mass="10624">MGLEDEQRMLTGSGDPKEEEEEEEELVDPLTTVREQCEQLEKCVKARERLELCDERVSSRSQTEEDCTEELLDFLHARDHCVAHKLFNSLK</sequence>
<evidence type="ECO:0000250" key="1">
    <source>
        <dbReference type="UniProtKB" id="P00127"/>
    </source>
</evidence>
<evidence type="ECO:0000250" key="2">
    <source>
        <dbReference type="UniProtKB" id="P99028"/>
    </source>
</evidence>
<evidence type="ECO:0000256" key="3">
    <source>
        <dbReference type="SAM" id="MobiDB-lite"/>
    </source>
</evidence>
<evidence type="ECO:0000269" key="4">
    <source>
    </source>
</evidence>
<evidence type="ECO:0000269" key="5">
    <source>
    </source>
</evidence>
<evidence type="ECO:0000269" key="6">
    <source>
    </source>
</evidence>
<evidence type="ECO:0000269" key="7">
    <source>
    </source>
</evidence>
<evidence type="ECO:0000305" key="8"/>
<evidence type="ECO:0007829" key="9">
    <source>
        <dbReference type="PDB" id="1L0L"/>
    </source>
</evidence>
<evidence type="ECO:0007829" key="10">
    <source>
        <dbReference type="PDB" id="1PP9"/>
    </source>
</evidence>
<evidence type="ECO:0007829" key="11">
    <source>
        <dbReference type="PDB" id="1SQV"/>
    </source>
</evidence>
<comment type="function">
    <text evidence="1">Component of the ubiquinol-cytochrome c oxidoreductase, a multisubunit transmembrane complex that is part of the mitochondrial electron transport chain which drives oxidative phosphorylation. The respiratory chain contains 3 multisubunit complexes succinate dehydrogenase (complex II, CII), ubiquinol-cytochrome c oxidoreductase (cytochrome b-c1 complex, complex III, CIII) and cytochrome c oxidase (complex IV, CIV), that cooperate to transfer electrons derived from NADH and succinate to molecular oxygen, creating an electrochemical gradient over the inner membrane that drives transmembrane transport and the ATP synthase. The cytochrome b-c1 complex catalyzes electron transfer from ubiquinol to cytochrome c, linking this redox reaction to translocation of protons across the mitochondrial inner membrane, with protons being carried across the membrane as hydrogens on the quinol. In the process called Q cycle, 2 protons are consumed from the matrix, 4 protons are released into the intermembrane space and 2 electrons are passed to cytochrome c.</text>
</comment>
<comment type="subunit">
    <text evidence="4 7">Component of the ubiquinol-cytochrome c oxidoreductase (cytochrome b-c1 complex, complex III, CIII), a multisubunit enzyme composed of 11 subunits. The complex is composed of 3 respiratory subunits cytochrome b, cytochrome c1 and Rieske protein UQCRFS1, 2 core protein subunits UQCRC1/QCR1 and UQCRC2/QCR2, and 6 low-molecular weight protein subunits UQCRH/QCR6, UQCRB/QCR7, UQCRQ/QCR8, UQCR10/QCR9, UQCR11/QCR10 and subunit 9, the cleavage product of Rieske protein UQCRFS1 (PubMed:9651245). The complex exists as an obligatory dimer and forms supercomplexes (SCs) in the inner mitochondrial membrane with NADH-ubiquinone oxidoreductase (complex I, CI) and cytochrome c oxidase (complex IV, CIV), resulting in different assemblies (supercomplex SCI(1)III(2)IV(1) and megacomplex MCI(2)III(2)IV(2)) (PubMed:27830641).</text>
</comment>
<comment type="subcellular location">
    <subcellularLocation>
        <location evidence="1">Mitochondrion inner membrane</location>
        <topology evidence="1">Peripheral membrane protein</topology>
        <orientation evidence="1">Intermembrane side</orientation>
    </subcellularLocation>
</comment>
<comment type="similarity">
    <text evidence="8">Belongs to the UQCRH/QCR6 family.</text>
</comment>
<gene>
    <name type="primary">UQCRH</name>
</gene>
<protein>
    <recommendedName>
        <fullName>Cytochrome b-c1 complex subunit 6, mitochondrial</fullName>
    </recommendedName>
    <alternativeName>
        <fullName>Complex III subunit 6</fullName>
    </alternativeName>
    <alternativeName>
        <fullName>Complex III subunit VIII</fullName>
    </alternativeName>
    <alternativeName>
        <fullName>Cytochrome c1 non-heme 11 kDa protein</fullName>
    </alternativeName>
    <alternativeName>
        <fullName>Mitochondrial hinge protein</fullName>
    </alternativeName>
    <alternativeName>
        <fullName>Ubiquinol-cytochrome c reductase complex 11 kDa protein</fullName>
    </alternativeName>
</protein>
<keyword id="KW-0002">3D-structure</keyword>
<keyword id="KW-0007">Acetylation</keyword>
<keyword id="KW-0903">Direct protein sequencing</keyword>
<keyword id="KW-1015">Disulfide bond</keyword>
<keyword id="KW-0249">Electron transport</keyword>
<keyword id="KW-0472">Membrane</keyword>
<keyword id="KW-0496">Mitochondrion</keyword>
<keyword id="KW-0999">Mitochondrion inner membrane</keyword>
<keyword id="KW-1185">Reference proteome</keyword>
<keyword id="KW-0679">Respiratory chain</keyword>
<keyword id="KW-0809">Transit peptide</keyword>
<keyword id="KW-0813">Transport</keyword>
<dbReference type="EMBL" id="BC102729">
    <property type="protein sequence ID" value="AAI02730.1"/>
    <property type="molecule type" value="mRNA"/>
</dbReference>
<dbReference type="PIR" id="A00119">
    <property type="entry name" value="CCBO11"/>
</dbReference>
<dbReference type="RefSeq" id="NP_001029917.1">
    <property type="nucleotide sequence ID" value="NM_001034745.2"/>
</dbReference>
<dbReference type="PDB" id="1BCC">
    <property type="method" value="X-ray"/>
    <property type="resolution" value="3.16 A"/>
    <property type="chains" value="H=14-91"/>
</dbReference>
<dbReference type="PDB" id="1BE3">
    <property type="method" value="X-ray"/>
    <property type="resolution" value="3.00 A"/>
    <property type="chains" value="H=14-91"/>
</dbReference>
<dbReference type="PDB" id="1BGY">
    <property type="method" value="X-ray"/>
    <property type="resolution" value="3.00 A"/>
    <property type="chains" value="H/T=14-91"/>
</dbReference>
<dbReference type="PDB" id="1L0L">
    <property type="method" value="X-ray"/>
    <property type="resolution" value="2.35 A"/>
    <property type="chains" value="H=14-91"/>
</dbReference>
<dbReference type="PDB" id="1L0N">
    <property type="method" value="X-ray"/>
    <property type="resolution" value="2.60 A"/>
    <property type="chains" value="H=14-91"/>
</dbReference>
<dbReference type="PDB" id="1NTK">
    <property type="method" value="X-ray"/>
    <property type="resolution" value="2.60 A"/>
    <property type="chains" value="H=14-91"/>
</dbReference>
<dbReference type="PDB" id="1NTM">
    <property type="method" value="X-ray"/>
    <property type="resolution" value="2.40 A"/>
    <property type="chains" value="H=14-91"/>
</dbReference>
<dbReference type="PDB" id="1NTZ">
    <property type="method" value="X-ray"/>
    <property type="resolution" value="2.60 A"/>
    <property type="chains" value="H=14-91"/>
</dbReference>
<dbReference type="PDB" id="1NU1">
    <property type="method" value="X-ray"/>
    <property type="resolution" value="3.20 A"/>
    <property type="chains" value="H=14-91"/>
</dbReference>
<dbReference type="PDB" id="1PP9">
    <property type="method" value="X-ray"/>
    <property type="resolution" value="2.10 A"/>
    <property type="chains" value="H/U=14-91"/>
</dbReference>
<dbReference type="PDB" id="1PPJ">
    <property type="method" value="X-ray"/>
    <property type="resolution" value="2.10 A"/>
    <property type="chains" value="H/U=14-91"/>
</dbReference>
<dbReference type="PDB" id="1QCR">
    <property type="method" value="X-ray"/>
    <property type="resolution" value="2.70 A"/>
    <property type="chains" value="H=31-90"/>
</dbReference>
<dbReference type="PDB" id="1SQB">
    <property type="method" value="X-ray"/>
    <property type="resolution" value="2.69 A"/>
    <property type="chains" value="H=14-91"/>
</dbReference>
<dbReference type="PDB" id="1SQP">
    <property type="method" value="X-ray"/>
    <property type="resolution" value="2.70 A"/>
    <property type="chains" value="H=14-91"/>
</dbReference>
<dbReference type="PDB" id="1SQQ">
    <property type="method" value="X-ray"/>
    <property type="resolution" value="3.00 A"/>
    <property type="chains" value="H=14-91"/>
</dbReference>
<dbReference type="PDB" id="1SQV">
    <property type="method" value="X-ray"/>
    <property type="resolution" value="2.85 A"/>
    <property type="chains" value="H=14-91"/>
</dbReference>
<dbReference type="PDB" id="1SQX">
    <property type="method" value="X-ray"/>
    <property type="resolution" value="2.60 A"/>
    <property type="chains" value="H=14-91"/>
</dbReference>
<dbReference type="PDB" id="2A06">
    <property type="method" value="X-ray"/>
    <property type="resolution" value="2.10 A"/>
    <property type="chains" value="H/U=14-91"/>
</dbReference>
<dbReference type="PDB" id="2BCC">
    <property type="method" value="X-ray"/>
    <property type="resolution" value="3.50 A"/>
    <property type="chains" value="H=14-91"/>
</dbReference>
<dbReference type="PDB" id="2FYU">
    <property type="method" value="X-ray"/>
    <property type="resolution" value="2.26 A"/>
    <property type="chains" value="H=14-91"/>
</dbReference>
<dbReference type="PDB" id="2YBB">
    <property type="method" value="EM"/>
    <property type="resolution" value="19.00 A"/>
    <property type="chains" value="H/h=14-91"/>
</dbReference>
<dbReference type="PDB" id="3BCC">
    <property type="method" value="X-ray"/>
    <property type="resolution" value="3.70 A"/>
    <property type="chains" value="H=14-91"/>
</dbReference>
<dbReference type="PDB" id="4D6T">
    <property type="method" value="X-ray"/>
    <property type="resolution" value="3.57 A"/>
    <property type="chains" value="H/U=1-91"/>
</dbReference>
<dbReference type="PDB" id="4D6U">
    <property type="method" value="X-ray"/>
    <property type="resolution" value="4.09 A"/>
    <property type="chains" value="H/U=1-91"/>
</dbReference>
<dbReference type="PDB" id="5GPN">
    <property type="method" value="EM"/>
    <property type="resolution" value="5.40 A"/>
    <property type="chains" value="H/T=14-91"/>
</dbReference>
<dbReference type="PDB" id="5KLV">
    <property type="method" value="X-ray"/>
    <property type="resolution" value="2.65 A"/>
    <property type="chains" value="H=14-91"/>
</dbReference>
<dbReference type="PDB" id="5LUF">
    <property type="method" value="EM"/>
    <property type="resolution" value="9.10 A"/>
    <property type="chains" value="h/t=14-91"/>
</dbReference>
<dbReference type="PDB" id="5NMI">
    <property type="method" value="X-ray"/>
    <property type="resolution" value="3.50 A"/>
    <property type="chains" value="H/U=1-91"/>
</dbReference>
<dbReference type="PDB" id="5OKD">
    <property type="method" value="X-ray"/>
    <property type="resolution" value="3.10 A"/>
    <property type="chains" value="H=1-91"/>
</dbReference>
<dbReference type="PDB" id="6FO0">
    <property type="method" value="EM"/>
    <property type="resolution" value="4.10 A"/>
    <property type="chains" value="H/U=1-91"/>
</dbReference>
<dbReference type="PDB" id="6FO2">
    <property type="method" value="EM"/>
    <property type="resolution" value="4.40 A"/>
    <property type="chains" value="H/U=1-91"/>
</dbReference>
<dbReference type="PDB" id="6FO6">
    <property type="method" value="EM"/>
    <property type="resolution" value="4.10 A"/>
    <property type="chains" value="H/U=1-91"/>
</dbReference>
<dbReference type="PDB" id="6HAW">
    <property type="method" value="X-ray"/>
    <property type="resolution" value="3.45 A"/>
    <property type="chains" value="H=27-90"/>
</dbReference>
<dbReference type="PDB" id="6NHG">
    <property type="method" value="X-ray"/>
    <property type="resolution" value="2.80 A"/>
    <property type="chains" value="H=14-91"/>
</dbReference>
<dbReference type="PDB" id="6XVF">
    <property type="method" value="X-ray"/>
    <property type="resolution" value="3.50 A"/>
    <property type="chains" value="H=27-90"/>
</dbReference>
<dbReference type="PDB" id="6ZFS">
    <property type="method" value="X-ray"/>
    <property type="resolution" value="3.50 A"/>
    <property type="chains" value="H=27-90"/>
</dbReference>
<dbReference type="PDB" id="6ZFT">
    <property type="method" value="X-ray"/>
    <property type="resolution" value="3.30 A"/>
    <property type="chains" value="H=26-90"/>
</dbReference>
<dbReference type="PDB" id="6ZFU">
    <property type="method" value="X-ray"/>
    <property type="resolution" value="3.50 A"/>
    <property type="chains" value="H=26-90"/>
</dbReference>
<dbReference type="PDB" id="7DGQ">
    <property type="method" value="EM"/>
    <property type="resolution" value="5.00 A"/>
    <property type="chains" value="B7/s=1-91"/>
</dbReference>
<dbReference type="PDB" id="7DGR">
    <property type="method" value="EM"/>
    <property type="resolution" value="4.60 A"/>
    <property type="chains" value="B3/s=1-91"/>
</dbReference>
<dbReference type="PDB" id="7DGS">
    <property type="method" value="EM"/>
    <property type="resolution" value="7.80 A"/>
    <property type="chains" value="B5/s=1-91"/>
</dbReference>
<dbReference type="PDB" id="7DKF">
    <property type="method" value="EM"/>
    <property type="resolution" value="8.30 A"/>
    <property type="chains" value="H1/T1=1-91"/>
</dbReference>
<dbReference type="PDB" id="7R3V">
    <property type="method" value="X-ray"/>
    <property type="resolution" value="3.20 A"/>
    <property type="chains" value="H=26-90"/>
</dbReference>
<dbReference type="PDB" id="7TAY">
    <property type="method" value="X-ray"/>
    <property type="resolution" value="2.95 A"/>
    <property type="chains" value="H=14-91"/>
</dbReference>
<dbReference type="PDB" id="7TZ6">
    <property type="method" value="EM"/>
    <property type="resolution" value="2.88 A"/>
    <property type="chains" value="H/U=14-91"/>
</dbReference>
<dbReference type="PDB" id="8P65">
    <property type="method" value="EM"/>
    <property type="resolution" value="3.00 A"/>
    <property type="chains" value="H/U=14-91"/>
</dbReference>
<dbReference type="PDB" id="9GCX">
    <property type="method" value="X-ray"/>
    <property type="resolution" value="3.52 A"/>
    <property type="chains" value="H=11-91"/>
</dbReference>
<dbReference type="PDBsum" id="1BCC"/>
<dbReference type="PDBsum" id="1BE3"/>
<dbReference type="PDBsum" id="1BGY"/>
<dbReference type="PDBsum" id="1L0L"/>
<dbReference type="PDBsum" id="1L0N"/>
<dbReference type="PDBsum" id="1NTK"/>
<dbReference type="PDBsum" id="1NTM"/>
<dbReference type="PDBsum" id="1NTZ"/>
<dbReference type="PDBsum" id="1NU1"/>
<dbReference type="PDBsum" id="1PP9"/>
<dbReference type="PDBsum" id="1PPJ"/>
<dbReference type="PDBsum" id="1QCR"/>
<dbReference type="PDBsum" id="1SQB"/>
<dbReference type="PDBsum" id="1SQP"/>
<dbReference type="PDBsum" id="1SQQ"/>
<dbReference type="PDBsum" id="1SQV"/>
<dbReference type="PDBsum" id="1SQX"/>
<dbReference type="PDBsum" id="2A06"/>
<dbReference type="PDBsum" id="2BCC"/>
<dbReference type="PDBsum" id="2FYU"/>
<dbReference type="PDBsum" id="2YBB"/>
<dbReference type="PDBsum" id="3BCC"/>
<dbReference type="PDBsum" id="4D6T"/>
<dbReference type="PDBsum" id="4D6U"/>
<dbReference type="PDBsum" id="5GPN"/>
<dbReference type="PDBsum" id="5KLV"/>
<dbReference type="PDBsum" id="5LUF"/>
<dbReference type="PDBsum" id="5NMI"/>
<dbReference type="PDBsum" id="5OKD"/>
<dbReference type="PDBsum" id="6FO0"/>
<dbReference type="PDBsum" id="6FO2"/>
<dbReference type="PDBsum" id="6FO6"/>
<dbReference type="PDBsum" id="6HAW"/>
<dbReference type="PDBsum" id="6NHG"/>
<dbReference type="PDBsum" id="6XVF"/>
<dbReference type="PDBsum" id="6ZFS"/>
<dbReference type="PDBsum" id="6ZFT"/>
<dbReference type="PDBsum" id="6ZFU"/>
<dbReference type="PDBsum" id="7DGQ"/>
<dbReference type="PDBsum" id="7DGR"/>
<dbReference type="PDBsum" id="7DGS"/>
<dbReference type="PDBsum" id="7DKF"/>
<dbReference type="PDBsum" id="7R3V"/>
<dbReference type="PDBsum" id="7TAY"/>
<dbReference type="PDBsum" id="7TZ6"/>
<dbReference type="PDBsum" id="8P65"/>
<dbReference type="PDBsum" id="9GCX"/>
<dbReference type="EMDB" id="EMD-17461"/>
<dbReference type="EMDB" id="EMD-26203"/>
<dbReference type="EMDB" id="EMD-30673"/>
<dbReference type="EMDB" id="EMD-30674"/>
<dbReference type="EMDB" id="EMD-30675"/>
<dbReference type="EMDB" id="EMD-30706"/>
<dbReference type="EMDB" id="EMD-4107"/>
<dbReference type="EMDB" id="EMD-4286"/>
<dbReference type="EMDB" id="EMD-4288"/>
<dbReference type="EMDB" id="EMD-4292"/>
<dbReference type="EMDB" id="EMD-9534"/>
<dbReference type="SMR" id="P00126"/>
<dbReference type="CORUM" id="P00126"/>
<dbReference type="DIP" id="DIP-38973N"/>
<dbReference type="FunCoup" id="P00126">
    <property type="interactions" value="930"/>
</dbReference>
<dbReference type="IntAct" id="P00126">
    <property type="interactions" value="2"/>
</dbReference>
<dbReference type="STRING" id="9913.ENSBTAP00000067387"/>
<dbReference type="PaxDb" id="9913-ENSBTAP00000012635"/>
<dbReference type="PeptideAtlas" id="P00126"/>
<dbReference type="GeneID" id="613899"/>
<dbReference type="KEGG" id="bta:613899"/>
<dbReference type="CTD" id="7388"/>
<dbReference type="VEuPathDB" id="HostDB:ENSBTAG00000009603"/>
<dbReference type="eggNOG" id="KOG4763">
    <property type="taxonomic scope" value="Eukaryota"/>
</dbReference>
<dbReference type="HOGENOM" id="CLU_115913_3_0_1"/>
<dbReference type="InParanoid" id="P00126"/>
<dbReference type="OMA" id="NTCNDRV"/>
<dbReference type="OrthoDB" id="405848at2759"/>
<dbReference type="TreeFam" id="TF105036"/>
<dbReference type="Reactome" id="R-BTA-611105">
    <property type="pathway name" value="Respiratory electron transport"/>
</dbReference>
<dbReference type="Reactome" id="R-BTA-9865881">
    <property type="pathway name" value="Complex III assembly"/>
</dbReference>
<dbReference type="EvolutionaryTrace" id="P00126"/>
<dbReference type="Proteomes" id="UP000009136">
    <property type="component" value="Chromosome 3"/>
</dbReference>
<dbReference type="Bgee" id="ENSBTAG00000009603">
    <property type="expression patterns" value="Expressed in cardiac ventricle and 107 other cell types or tissues"/>
</dbReference>
<dbReference type="GO" id="GO:0005743">
    <property type="term" value="C:mitochondrial inner membrane"/>
    <property type="evidence" value="ECO:0007669"/>
    <property type="project" value="UniProtKB-SubCell"/>
</dbReference>
<dbReference type="GO" id="GO:0045275">
    <property type="term" value="C:respiratory chain complex III"/>
    <property type="evidence" value="ECO:0000318"/>
    <property type="project" value="GO_Central"/>
</dbReference>
<dbReference type="GO" id="GO:0006122">
    <property type="term" value="P:mitochondrial electron transport, ubiquinol to cytochrome c"/>
    <property type="evidence" value="ECO:0000318"/>
    <property type="project" value="GO_Central"/>
</dbReference>
<dbReference type="FunFam" id="1.10.287.20:FF:000002">
    <property type="entry name" value="Cytochrome b-c1 complex subunit 6"/>
    <property type="match status" value="1"/>
</dbReference>
<dbReference type="Gene3D" id="1.10.287.20">
    <property type="entry name" value="Ubiquinol-cytochrome C reductase hinge domain"/>
    <property type="match status" value="1"/>
</dbReference>
<dbReference type="InterPro" id="IPR003422">
    <property type="entry name" value="Cyt_b-c1_6"/>
</dbReference>
<dbReference type="InterPro" id="IPR023184">
    <property type="entry name" value="Ubol_cytC_Rdtase_hinge_dom"/>
</dbReference>
<dbReference type="InterPro" id="IPR036811">
    <property type="entry name" value="Ubol_cytC_Rdtase_hinge_dom_sf"/>
</dbReference>
<dbReference type="PANTHER" id="PTHR15336:SF0">
    <property type="entry name" value="CYTOCHROME B-C1 COMPLEX SUBUNIT 6, MITOCHONDRIAL"/>
    <property type="match status" value="1"/>
</dbReference>
<dbReference type="PANTHER" id="PTHR15336">
    <property type="entry name" value="UBIQUINOL-CYTOCHROME C REDUCTASE COMPLEX 7.8 KDA PROTEIN"/>
    <property type="match status" value="1"/>
</dbReference>
<dbReference type="Pfam" id="PF02320">
    <property type="entry name" value="UCR_hinge"/>
    <property type="match status" value="1"/>
</dbReference>
<dbReference type="PIRSF" id="PIRSF000019">
    <property type="entry name" value="Bc1_11K"/>
    <property type="match status" value="1"/>
</dbReference>
<dbReference type="SUPFAM" id="SSF81531">
    <property type="entry name" value="Non-heme 11 kDa protein of cytochrome bc1 complex (Ubiquinol-cytochrome c reductase)"/>
    <property type="match status" value="1"/>
</dbReference>
<name>QCR6_BOVIN</name>